<feature type="chain" id="PRO_0000413597" description="F420-dependent glucose-6-phosphate dehydrogenase">
    <location>
        <begin position="1"/>
        <end position="339"/>
    </location>
</feature>
<feature type="active site" description="Proton donor" evidence="1">
    <location>
        <position position="42"/>
    </location>
</feature>
<feature type="active site" description="Proton acceptor" evidence="1">
    <location>
        <position position="111"/>
    </location>
</feature>
<feature type="binding site" evidence="1">
    <location>
        <position position="41"/>
    </location>
    <ligand>
        <name>coenzyme F420-(gamma-Glu)n</name>
        <dbReference type="ChEBI" id="CHEBI:133980"/>
    </ligand>
</feature>
<feature type="binding site" evidence="1">
    <location>
        <position position="78"/>
    </location>
    <ligand>
        <name>coenzyme F420-(gamma-Glu)n</name>
        <dbReference type="ChEBI" id="CHEBI:133980"/>
    </ligand>
</feature>
<feature type="binding site" evidence="1">
    <location>
        <begin position="109"/>
        <end position="110"/>
    </location>
    <ligand>
        <name>coenzyme F420-(gamma-Glu)n</name>
        <dbReference type="ChEBI" id="CHEBI:133980"/>
    </ligand>
</feature>
<feature type="binding site" evidence="1">
    <location>
        <position position="114"/>
    </location>
    <ligand>
        <name>coenzyme F420-(gamma-Glu)n</name>
        <dbReference type="ChEBI" id="CHEBI:133980"/>
    </ligand>
</feature>
<feature type="binding site" evidence="1">
    <location>
        <begin position="177"/>
        <end position="178"/>
    </location>
    <ligand>
        <name>coenzyme F420-(gamma-Glu)n</name>
        <dbReference type="ChEBI" id="CHEBI:133980"/>
    </ligand>
</feature>
<feature type="binding site" evidence="1">
    <location>
        <begin position="180"/>
        <end position="181"/>
    </location>
    <ligand>
        <name>coenzyme F420-(gamma-Glu)n</name>
        <dbReference type="ChEBI" id="CHEBI:133980"/>
    </ligand>
</feature>
<feature type="binding site" evidence="1">
    <location>
        <position position="195"/>
    </location>
    <ligand>
        <name>substrate</name>
    </ligand>
</feature>
<feature type="binding site" evidence="1">
    <location>
        <position position="198"/>
    </location>
    <ligand>
        <name>substrate</name>
    </ligand>
</feature>
<feature type="binding site" evidence="1">
    <location>
        <position position="259"/>
    </location>
    <ligand>
        <name>substrate</name>
    </ligand>
</feature>
<feature type="binding site" evidence="1">
    <location>
        <position position="283"/>
    </location>
    <ligand>
        <name>substrate</name>
    </ligand>
</feature>
<gene>
    <name evidence="1" type="primary">fgd</name>
    <name type="ordered locus">Namu_0967</name>
</gene>
<keyword id="KW-0119">Carbohydrate metabolism</keyword>
<keyword id="KW-0560">Oxidoreductase</keyword>
<keyword id="KW-1185">Reference proteome</keyword>
<proteinExistence type="inferred from homology"/>
<name>FGD_NAKMY</name>
<accession>C8XBB4</accession>
<reference key="1">
    <citation type="submission" date="2009-09" db="EMBL/GenBank/DDBJ databases">
        <title>The complete genome of Nakamurella multipartita DSM 44233.</title>
        <authorList>
            <consortium name="US DOE Joint Genome Institute (JGI-PGF)"/>
            <person name="Lucas S."/>
            <person name="Copeland A."/>
            <person name="Lapidus A."/>
            <person name="Glavina del Rio T."/>
            <person name="Dalin E."/>
            <person name="Tice H."/>
            <person name="Bruce D."/>
            <person name="Goodwin L."/>
            <person name="Pitluck S."/>
            <person name="Kyrpides N."/>
            <person name="Mavromatis K."/>
            <person name="Ivanova N."/>
            <person name="Ovchinnikova G."/>
            <person name="Sims D."/>
            <person name="Meincke L."/>
            <person name="Brettin T."/>
            <person name="Detter J.C."/>
            <person name="Han C."/>
            <person name="Larimer F."/>
            <person name="Land M."/>
            <person name="Hauser L."/>
            <person name="Markowitz V."/>
            <person name="Cheng J.-F."/>
            <person name="Hugenholtz P."/>
            <person name="Woyke T."/>
            <person name="Wu D."/>
            <person name="Klenk H.-P."/>
            <person name="Eisen J.A."/>
        </authorList>
    </citation>
    <scope>NUCLEOTIDE SEQUENCE [LARGE SCALE GENOMIC DNA]</scope>
    <source>
        <strain>ATCC 700099 / DSM 44233 / CIP 104796 / JCM 9543 / NBRC 105858 / Y-104</strain>
    </source>
</reference>
<organism>
    <name type="scientific">Nakamurella multipartita (strain ATCC 700099 / DSM 44233 / CIP 104796 / JCM 9543 / NBRC 105858 / Y-104)</name>
    <name type="common">Microsphaera multipartita</name>
    <dbReference type="NCBI Taxonomy" id="479431"/>
    <lineage>
        <taxon>Bacteria</taxon>
        <taxon>Bacillati</taxon>
        <taxon>Actinomycetota</taxon>
        <taxon>Actinomycetes</taxon>
        <taxon>Nakamurellales</taxon>
        <taxon>Nakamurellaceae</taxon>
        <taxon>Nakamurella</taxon>
    </lineage>
</organism>
<sequence length="339" mass="37533">MTPPPIRFGYKASAEQFGPSELADLAVAAEEHGFDSVFISDHLQPWRHDGGHAPASLPWLGAVGARTQRVILGTSVLTPTIRYHPGVIAQAFATLGSMYPGRIVLGVGTGESLNEVPLGLAWPEQKERFARLKESVNLIHELWTGERVTFEGEYYRTDKATIYDRPADPVPIYIGASGPAATRLAGRIADGFITTSGKAPSLYTDTLLPALRDGVEKAGRRLDELDTLMEMKVSFDTDRERAMQDTRFWAALALKPEQKAGVEDPLEMQRLADELPIEQAASRWIVSDDPDEHVEKIRTYLDLGFRHLVFHAPGHDQQRFLALYGEQILPRLRALVGQG</sequence>
<evidence type="ECO:0000255" key="1">
    <source>
        <dbReference type="HAMAP-Rule" id="MF_02123"/>
    </source>
</evidence>
<dbReference type="EC" id="1.1.98.2" evidence="1"/>
<dbReference type="EMBL" id="CP001737">
    <property type="protein sequence ID" value="ACV77376.1"/>
    <property type="molecule type" value="Genomic_DNA"/>
</dbReference>
<dbReference type="RefSeq" id="WP_015746290.1">
    <property type="nucleotide sequence ID" value="NC_013235.1"/>
</dbReference>
<dbReference type="SMR" id="C8XBB4"/>
<dbReference type="STRING" id="479431.Namu_0967"/>
<dbReference type="KEGG" id="nml:Namu_0967"/>
<dbReference type="eggNOG" id="COG2141">
    <property type="taxonomic scope" value="Bacteria"/>
</dbReference>
<dbReference type="HOGENOM" id="CLU_027853_4_0_11"/>
<dbReference type="InParanoid" id="C8XBB4"/>
<dbReference type="OrthoDB" id="180193at2"/>
<dbReference type="Proteomes" id="UP000002218">
    <property type="component" value="Chromosome"/>
</dbReference>
<dbReference type="GO" id="GO:0070967">
    <property type="term" value="F:coenzyme F420 binding"/>
    <property type="evidence" value="ECO:0007669"/>
    <property type="project" value="UniProtKB-UniRule"/>
</dbReference>
<dbReference type="GO" id="GO:0052749">
    <property type="term" value="F:glucose-6-phosphate dehydrogenase (coenzyme F420) activity"/>
    <property type="evidence" value="ECO:0007669"/>
    <property type="project" value="UniProtKB-EC"/>
</dbReference>
<dbReference type="GO" id="GO:0016705">
    <property type="term" value="F:oxidoreductase activity, acting on paired donors, with incorporation or reduction of molecular oxygen"/>
    <property type="evidence" value="ECO:0007669"/>
    <property type="project" value="InterPro"/>
</dbReference>
<dbReference type="GO" id="GO:0005975">
    <property type="term" value="P:carbohydrate metabolic process"/>
    <property type="evidence" value="ECO:0007669"/>
    <property type="project" value="UniProtKB-UniRule"/>
</dbReference>
<dbReference type="CDD" id="cd01097">
    <property type="entry name" value="Tetrahydromethanopterin_reductase"/>
    <property type="match status" value="1"/>
</dbReference>
<dbReference type="Gene3D" id="3.20.20.30">
    <property type="entry name" value="Luciferase-like domain"/>
    <property type="match status" value="1"/>
</dbReference>
<dbReference type="HAMAP" id="MF_02123">
    <property type="entry name" value="F420_G6P_DH"/>
    <property type="match status" value="1"/>
</dbReference>
<dbReference type="InterPro" id="IPR019944">
    <property type="entry name" value="F420-dep_G6P_DH"/>
</dbReference>
<dbReference type="InterPro" id="IPR050564">
    <property type="entry name" value="F420-G6PD/mer"/>
</dbReference>
<dbReference type="InterPro" id="IPR019945">
    <property type="entry name" value="F420_G6P_DH-rel"/>
</dbReference>
<dbReference type="InterPro" id="IPR011251">
    <property type="entry name" value="Luciferase-like_dom"/>
</dbReference>
<dbReference type="InterPro" id="IPR036661">
    <property type="entry name" value="Luciferase-like_sf"/>
</dbReference>
<dbReference type="NCBIfam" id="TIGR03554">
    <property type="entry name" value="F420_G6P_DH"/>
    <property type="match status" value="1"/>
</dbReference>
<dbReference type="NCBIfam" id="TIGR03557">
    <property type="entry name" value="F420_G6P_family"/>
    <property type="match status" value="1"/>
</dbReference>
<dbReference type="PANTHER" id="PTHR43244">
    <property type="match status" value="1"/>
</dbReference>
<dbReference type="PANTHER" id="PTHR43244:SF1">
    <property type="entry name" value="5,10-METHYLENETETRAHYDROMETHANOPTERIN REDUCTASE"/>
    <property type="match status" value="1"/>
</dbReference>
<dbReference type="Pfam" id="PF00296">
    <property type="entry name" value="Bac_luciferase"/>
    <property type="match status" value="1"/>
</dbReference>
<dbReference type="SUPFAM" id="SSF51679">
    <property type="entry name" value="Bacterial luciferase-like"/>
    <property type="match status" value="1"/>
</dbReference>
<protein>
    <recommendedName>
        <fullName evidence="1">F420-dependent glucose-6-phosphate dehydrogenase</fullName>
        <shortName evidence="1">FGD</shortName>
        <shortName evidence="1">G6PD</shortName>
        <ecNumber evidence="1">1.1.98.2</ecNumber>
    </recommendedName>
</protein>
<comment type="function">
    <text evidence="1">Catalyzes the coenzyme F420-dependent oxidation of glucose 6-phosphate (G6P) to 6-phosphogluconolactone.</text>
</comment>
<comment type="catalytic activity">
    <reaction evidence="1">
        <text>oxidized coenzyme F420-(gamma-L-Glu)(n) + D-glucose 6-phosphate + H(+) = 6-phospho-D-glucono-1,5-lactone + reduced coenzyme F420-(gamma-L-Glu)(n)</text>
        <dbReference type="Rhea" id="RHEA:27294"/>
        <dbReference type="Rhea" id="RHEA-COMP:12939"/>
        <dbReference type="Rhea" id="RHEA-COMP:14378"/>
        <dbReference type="ChEBI" id="CHEBI:15378"/>
        <dbReference type="ChEBI" id="CHEBI:57955"/>
        <dbReference type="ChEBI" id="CHEBI:61548"/>
        <dbReference type="ChEBI" id="CHEBI:133980"/>
        <dbReference type="ChEBI" id="CHEBI:139511"/>
        <dbReference type="EC" id="1.1.98.2"/>
    </reaction>
</comment>
<comment type="subunit">
    <text evidence="1">Homodimer.</text>
</comment>
<comment type="similarity">
    <text evidence="1">Belongs to the F420-dependent glucose-6-phosphate dehydrogenase family.</text>
</comment>